<proteinExistence type="evidence at protein level"/>
<accession>P62313</accession>
<accession>Q9Y4Y8</accession>
<feature type="chain" id="PRO_0000125576" description="U6 snRNA-associated Sm-like protein LSm6">
    <location>
        <begin position="1"/>
        <end position="80"/>
    </location>
</feature>
<feature type="domain" description="Sm" evidence="2">
    <location>
        <begin position="7"/>
        <end position="79"/>
    </location>
</feature>
<feature type="modified residue" description="N6-acetyllysine" evidence="1">
    <location>
        <position position="59"/>
    </location>
</feature>
<dbReference type="EMBL" id="AK019126">
    <property type="protein sequence ID" value="BAB31555.1"/>
    <property type="molecule type" value="mRNA"/>
</dbReference>
<dbReference type="EMBL" id="BC030427">
    <property type="protein sequence ID" value="AAH30427.1"/>
    <property type="molecule type" value="mRNA"/>
</dbReference>
<dbReference type="CCDS" id="CCDS40396.1"/>
<dbReference type="RefSeq" id="NP_001177933.1">
    <property type="nucleotide sequence ID" value="NM_001191004.1"/>
</dbReference>
<dbReference type="RefSeq" id="NP_084421.1">
    <property type="nucleotide sequence ID" value="NM_030145.3"/>
</dbReference>
<dbReference type="RefSeq" id="XP_030099715.1">
    <property type="nucleotide sequence ID" value="XM_030243855.1"/>
</dbReference>
<dbReference type="RefSeq" id="XP_036010276.1">
    <property type="nucleotide sequence ID" value="XM_036154383.1"/>
</dbReference>
<dbReference type="SMR" id="P62313"/>
<dbReference type="BioGRID" id="219553">
    <property type="interactions" value="9"/>
</dbReference>
<dbReference type="FunCoup" id="P62313">
    <property type="interactions" value="2428"/>
</dbReference>
<dbReference type="STRING" id="10090.ENSMUSP00000119841"/>
<dbReference type="iPTMnet" id="P62313"/>
<dbReference type="PhosphoSitePlus" id="P62313"/>
<dbReference type="SwissPalm" id="P62313"/>
<dbReference type="PaxDb" id="10090-ENSMUSP00000049722"/>
<dbReference type="PeptideAtlas" id="P62313"/>
<dbReference type="ProteomicsDB" id="290179"/>
<dbReference type="Pumba" id="P62313"/>
<dbReference type="TopDownProteomics" id="P62313"/>
<dbReference type="Antibodypedia" id="27518">
    <property type="antibodies" value="100 antibodies from 20 providers"/>
</dbReference>
<dbReference type="Ensembl" id="ENSMUST00000051867.7">
    <property type="protein sequence ID" value="ENSMUSP00000049722.7"/>
    <property type="gene ID" value="ENSMUSG00000031683.17"/>
</dbReference>
<dbReference type="Ensembl" id="ENSMUST00000130325.8">
    <property type="protein sequence ID" value="ENSMUSP00000119841.2"/>
    <property type="gene ID" value="ENSMUSG00000031683.17"/>
</dbReference>
<dbReference type="Ensembl" id="ENSMUST00000146824.2">
    <property type="protein sequence ID" value="ENSMUSP00000148221.2"/>
    <property type="gene ID" value="ENSMUSG00000031683.17"/>
</dbReference>
<dbReference type="GeneID" id="78651"/>
<dbReference type="KEGG" id="mmu:78651"/>
<dbReference type="UCSC" id="uc009mie.2">
    <property type="organism name" value="mouse"/>
</dbReference>
<dbReference type="AGR" id="MGI:1925901"/>
<dbReference type="CTD" id="11157"/>
<dbReference type="MGI" id="MGI:1925901">
    <property type="gene designation" value="Lsm6"/>
</dbReference>
<dbReference type="VEuPathDB" id="HostDB:ENSMUSG00000031683"/>
<dbReference type="eggNOG" id="KOG1783">
    <property type="taxonomic scope" value="Eukaryota"/>
</dbReference>
<dbReference type="GeneTree" id="ENSGT00940000154978"/>
<dbReference type="HOGENOM" id="CLU_076902_7_4_1"/>
<dbReference type="InParanoid" id="P62313"/>
<dbReference type="OMA" id="EQTVEYV"/>
<dbReference type="OrthoDB" id="268799at2759"/>
<dbReference type="PhylomeDB" id="P62313"/>
<dbReference type="TreeFam" id="TF313751"/>
<dbReference type="Reactome" id="R-MMU-430039">
    <property type="pathway name" value="mRNA decay by 5' to 3' exoribonuclease"/>
</dbReference>
<dbReference type="Reactome" id="R-MMU-72163">
    <property type="pathway name" value="mRNA Splicing - Major Pathway"/>
</dbReference>
<dbReference type="BioGRID-ORCS" id="78651">
    <property type="hits" value="14 hits in 46 CRISPR screens"/>
</dbReference>
<dbReference type="ChiTaRS" id="Lsm6">
    <property type="organism name" value="mouse"/>
</dbReference>
<dbReference type="PRO" id="PR:P62313"/>
<dbReference type="Proteomes" id="UP000000589">
    <property type="component" value="Chromosome 8"/>
</dbReference>
<dbReference type="RNAct" id="P62313">
    <property type="molecule type" value="protein"/>
</dbReference>
<dbReference type="Bgee" id="ENSMUSG00000031683">
    <property type="expression patterns" value="Expressed in manus and 233 other cell types or tissues"/>
</dbReference>
<dbReference type="ExpressionAtlas" id="P62313">
    <property type="expression patterns" value="baseline and differential"/>
</dbReference>
<dbReference type="GO" id="GO:0005737">
    <property type="term" value="C:cytoplasm"/>
    <property type="evidence" value="ECO:0000266"/>
    <property type="project" value="MGI"/>
</dbReference>
<dbReference type="GO" id="GO:0120115">
    <property type="term" value="C:Lsm2-8 complex"/>
    <property type="evidence" value="ECO:0000250"/>
    <property type="project" value="UniProtKB"/>
</dbReference>
<dbReference type="GO" id="GO:0005634">
    <property type="term" value="C:nucleus"/>
    <property type="evidence" value="ECO:0000250"/>
    <property type="project" value="UniProtKB"/>
</dbReference>
<dbReference type="GO" id="GO:0071005">
    <property type="term" value="C:U2-type precatalytic spliceosome"/>
    <property type="evidence" value="ECO:0000250"/>
    <property type="project" value="UniProtKB"/>
</dbReference>
<dbReference type="GO" id="GO:0046540">
    <property type="term" value="C:U4/U6 x U5 tri-snRNP complex"/>
    <property type="evidence" value="ECO:0000250"/>
    <property type="project" value="UniProtKB"/>
</dbReference>
<dbReference type="GO" id="GO:0046982">
    <property type="term" value="F:protein heterodimerization activity"/>
    <property type="evidence" value="ECO:0000266"/>
    <property type="project" value="MGI"/>
</dbReference>
<dbReference type="GO" id="GO:0003723">
    <property type="term" value="F:RNA binding"/>
    <property type="evidence" value="ECO:0007669"/>
    <property type="project" value="UniProtKB-KW"/>
</dbReference>
<dbReference type="GO" id="GO:0006402">
    <property type="term" value="P:mRNA catabolic process"/>
    <property type="evidence" value="ECO:0000266"/>
    <property type="project" value="MGI"/>
</dbReference>
<dbReference type="GO" id="GO:0000398">
    <property type="term" value="P:mRNA splicing, via spliceosome"/>
    <property type="evidence" value="ECO:0000250"/>
    <property type="project" value="UniProtKB"/>
</dbReference>
<dbReference type="GO" id="GO:0006364">
    <property type="term" value="P:rRNA processing"/>
    <property type="evidence" value="ECO:0007669"/>
    <property type="project" value="UniProtKB-KW"/>
</dbReference>
<dbReference type="GO" id="GO:0008033">
    <property type="term" value="P:tRNA processing"/>
    <property type="evidence" value="ECO:0007669"/>
    <property type="project" value="UniProtKB-KW"/>
</dbReference>
<dbReference type="CDD" id="cd01726">
    <property type="entry name" value="LSm6"/>
    <property type="match status" value="1"/>
</dbReference>
<dbReference type="FunFam" id="2.30.30.100:FF:000010">
    <property type="entry name" value="U6 snRNA-associated Sm-like protein LSm6"/>
    <property type="match status" value="1"/>
</dbReference>
<dbReference type="Gene3D" id="2.30.30.100">
    <property type="match status" value="1"/>
</dbReference>
<dbReference type="InterPro" id="IPR016487">
    <property type="entry name" value="Lsm6/sSmF"/>
</dbReference>
<dbReference type="InterPro" id="IPR010920">
    <property type="entry name" value="LSM_dom_sf"/>
</dbReference>
<dbReference type="InterPro" id="IPR047575">
    <property type="entry name" value="Sm"/>
</dbReference>
<dbReference type="InterPro" id="IPR001163">
    <property type="entry name" value="Sm_dom_euk/arc"/>
</dbReference>
<dbReference type="PANTHER" id="PTHR11021">
    <property type="entry name" value="SMALL NUCLEAR RIBONUCLEOPROTEIN F SNRNP-F"/>
    <property type="match status" value="1"/>
</dbReference>
<dbReference type="PANTHER" id="PTHR11021:SF1">
    <property type="entry name" value="U6 SNRNA-ASSOCIATED SM-LIKE PROTEIN LSM6"/>
    <property type="match status" value="1"/>
</dbReference>
<dbReference type="Pfam" id="PF01423">
    <property type="entry name" value="LSM"/>
    <property type="match status" value="1"/>
</dbReference>
<dbReference type="PIRSF" id="PIRSF006609">
    <property type="entry name" value="snRNP_SmF"/>
    <property type="match status" value="1"/>
</dbReference>
<dbReference type="SMART" id="SM00651">
    <property type="entry name" value="Sm"/>
    <property type="match status" value="1"/>
</dbReference>
<dbReference type="SUPFAM" id="SSF50182">
    <property type="entry name" value="Sm-like ribonucleoproteins"/>
    <property type="match status" value="1"/>
</dbReference>
<dbReference type="PROSITE" id="PS52002">
    <property type="entry name" value="SM"/>
    <property type="match status" value="1"/>
</dbReference>
<evidence type="ECO:0000250" key="1">
    <source>
        <dbReference type="UniProtKB" id="P62312"/>
    </source>
</evidence>
<evidence type="ECO:0000255" key="2">
    <source>
        <dbReference type="PROSITE-ProRule" id="PRU01346"/>
    </source>
</evidence>
<evidence type="ECO:0000305" key="3"/>
<name>LSM6_MOUSE</name>
<keyword id="KW-0007">Acetylation</keyword>
<keyword id="KW-0963">Cytoplasm</keyword>
<keyword id="KW-0507">mRNA processing</keyword>
<keyword id="KW-0508">mRNA splicing</keyword>
<keyword id="KW-0539">Nucleus</keyword>
<keyword id="KW-1185">Reference proteome</keyword>
<keyword id="KW-0687">Ribonucleoprotein</keyword>
<keyword id="KW-0694">RNA-binding</keyword>
<keyword id="KW-0698">rRNA processing</keyword>
<keyword id="KW-0747">Spliceosome</keyword>
<keyword id="KW-0819">tRNA processing</keyword>
<reference key="1">
    <citation type="journal article" date="2005" name="Science">
        <title>The transcriptional landscape of the mammalian genome.</title>
        <authorList>
            <person name="Carninci P."/>
            <person name="Kasukawa T."/>
            <person name="Katayama S."/>
            <person name="Gough J."/>
            <person name="Frith M.C."/>
            <person name="Maeda N."/>
            <person name="Oyama R."/>
            <person name="Ravasi T."/>
            <person name="Lenhard B."/>
            <person name="Wells C."/>
            <person name="Kodzius R."/>
            <person name="Shimokawa K."/>
            <person name="Bajic V.B."/>
            <person name="Brenner S.E."/>
            <person name="Batalov S."/>
            <person name="Forrest A.R."/>
            <person name="Zavolan M."/>
            <person name="Davis M.J."/>
            <person name="Wilming L.G."/>
            <person name="Aidinis V."/>
            <person name="Allen J.E."/>
            <person name="Ambesi-Impiombato A."/>
            <person name="Apweiler R."/>
            <person name="Aturaliya R.N."/>
            <person name="Bailey T.L."/>
            <person name="Bansal M."/>
            <person name="Baxter L."/>
            <person name="Beisel K.W."/>
            <person name="Bersano T."/>
            <person name="Bono H."/>
            <person name="Chalk A.M."/>
            <person name="Chiu K.P."/>
            <person name="Choudhary V."/>
            <person name="Christoffels A."/>
            <person name="Clutterbuck D.R."/>
            <person name="Crowe M.L."/>
            <person name="Dalla E."/>
            <person name="Dalrymple B.P."/>
            <person name="de Bono B."/>
            <person name="Della Gatta G."/>
            <person name="di Bernardo D."/>
            <person name="Down T."/>
            <person name="Engstrom P."/>
            <person name="Fagiolini M."/>
            <person name="Faulkner G."/>
            <person name="Fletcher C.F."/>
            <person name="Fukushima T."/>
            <person name="Furuno M."/>
            <person name="Futaki S."/>
            <person name="Gariboldi M."/>
            <person name="Georgii-Hemming P."/>
            <person name="Gingeras T.R."/>
            <person name="Gojobori T."/>
            <person name="Green R.E."/>
            <person name="Gustincich S."/>
            <person name="Harbers M."/>
            <person name="Hayashi Y."/>
            <person name="Hensch T.K."/>
            <person name="Hirokawa N."/>
            <person name="Hill D."/>
            <person name="Huminiecki L."/>
            <person name="Iacono M."/>
            <person name="Ikeo K."/>
            <person name="Iwama A."/>
            <person name="Ishikawa T."/>
            <person name="Jakt M."/>
            <person name="Kanapin A."/>
            <person name="Katoh M."/>
            <person name="Kawasawa Y."/>
            <person name="Kelso J."/>
            <person name="Kitamura H."/>
            <person name="Kitano H."/>
            <person name="Kollias G."/>
            <person name="Krishnan S.P."/>
            <person name="Kruger A."/>
            <person name="Kummerfeld S.K."/>
            <person name="Kurochkin I.V."/>
            <person name="Lareau L.F."/>
            <person name="Lazarevic D."/>
            <person name="Lipovich L."/>
            <person name="Liu J."/>
            <person name="Liuni S."/>
            <person name="McWilliam S."/>
            <person name="Madan Babu M."/>
            <person name="Madera M."/>
            <person name="Marchionni L."/>
            <person name="Matsuda H."/>
            <person name="Matsuzawa S."/>
            <person name="Miki H."/>
            <person name="Mignone F."/>
            <person name="Miyake S."/>
            <person name="Morris K."/>
            <person name="Mottagui-Tabar S."/>
            <person name="Mulder N."/>
            <person name="Nakano N."/>
            <person name="Nakauchi H."/>
            <person name="Ng P."/>
            <person name="Nilsson R."/>
            <person name="Nishiguchi S."/>
            <person name="Nishikawa S."/>
            <person name="Nori F."/>
            <person name="Ohara O."/>
            <person name="Okazaki Y."/>
            <person name="Orlando V."/>
            <person name="Pang K.C."/>
            <person name="Pavan W.J."/>
            <person name="Pavesi G."/>
            <person name="Pesole G."/>
            <person name="Petrovsky N."/>
            <person name="Piazza S."/>
            <person name="Reed J."/>
            <person name="Reid J.F."/>
            <person name="Ring B.Z."/>
            <person name="Ringwald M."/>
            <person name="Rost B."/>
            <person name="Ruan Y."/>
            <person name="Salzberg S.L."/>
            <person name="Sandelin A."/>
            <person name="Schneider C."/>
            <person name="Schoenbach C."/>
            <person name="Sekiguchi K."/>
            <person name="Semple C.A."/>
            <person name="Seno S."/>
            <person name="Sessa L."/>
            <person name="Sheng Y."/>
            <person name="Shibata Y."/>
            <person name="Shimada H."/>
            <person name="Shimada K."/>
            <person name="Silva D."/>
            <person name="Sinclair B."/>
            <person name="Sperling S."/>
            <person name="Stupka E."/>
            <person name="Sugiura K."/>
            <person name="Sultana R."/>
            <person name="Takenaka Y."/>
            <person name="Taki K."/>
            <person name="Tammoja K."/>
            <person name="Tan S.L."/>
            <person name="Tang S."/>
            <person name="Taylor M.S."/>
            <person name="Tegner J."/>
            <person name="Teichmann S.A."/>
            <person name="Ueda H.R."/>
            <person name="van Nimwegen E."/>
            <person name="Verardo R."/>
            <person name="Wei C.L."/>
            <person name="Yagi K."/>
            <person name="Yamanishi H."/>
            <person name="Zabarovsky E."/>
            <person name="Zhu S."/>
            <person name="Zimmer A."/>
            <person name="Hide W."/>
            <person name="Bult C."/>
            <person name="Grimmond S.M."/>
            <person name="Teasdale R.D."/>
            <person name="Liu E.T."/>
            <person name="Brusic V."/>
            <person name="Quackenbush J."/>
            <person name="Wahlestedt C."/>
            <person name="Mattick J.S."/>
            <person name="Hume D.A."/>
            <person name="Kai C."/>
            <person name="Sasaki D."/>
            <person name="Tomaru Y."/>
            <person name="Fukuda S."/>
            <person name="Kanamori-Katayama M."/>
            <person name="Suzuki M."/>
            <person name="Aoki J."/>
            <person name="Arakawa T."/>
            <person name="Iida J."/>
            <person name="Imamura K."/>
            <person name="Itoh M."/>
            <person name="Kato T."/>
            <person name="Kawaji H."/>
            <person name="Kawagashira N."/>
            <person name="Kawashima T."/>
            <person name="Kojima M."/>
            <person name="Kondo S."/>
            <person name="Konno H."/>
            <person name="Nakano K."/>
            <person name="Ninomiya N."/>
            <person name="Nishio T."/>
            <person name="Okada M."/>
            <person name="Plessy C."/>
            <person name="Shibata K."/>
            <person name="Shiraki T."/>
            <person name="Suzuki S."/>
            <person name="Tagami M."/>
            <person name="Waki K."/>
            <person name="Watahiki A."/>
            <person name="Okamura-Oho Y."/>
            <person name="Suzuki H."/>
            <person name="Kawai J."/>
            <person name="Hayashizaki Y."/>
        </authorList>
    </citation>
    <scope>NUCLEOTIDE SEQUENCE [LARGE SCALE MRNA]</scope>
    <source>
        <strain>C57BL/6J</strain>
    </source>
</reference>
<reference key="2">
    <citation type="journal article" date="2004" name="Genome Res.">
        <title>The status, quality, and expansion of the NIH full-length cDNA project: the Mammalian Gene Collection (MGC).</title>
        <authorList>
            <consortium name="The MGC Project Team"/>
        </authorList>
    </citation>
    <scope>NUCLEOTIDE SEQUENCE [LARGE SCALE MRNA]</scope>
    <source>
        <strain>FVB/N</strain>
        <tissue>Mammary tumor</tissue>
    </source>
</reference>
<reference key="3">
    <citation type="journal article" date="2010" name="Cell">
        <title>A tissue-specific atlas of mouse protein phosphorylation and expression.</title>
        <authorList>
            <person name="Huttlin E.L."/>
            <person name="Jedrychowski M.P."/>
            <person name="Elias J.E."/>
            <person name="Goswami T."/>
            <person name="Rad R."/>
            <person name="Beausoleil S.A."/>
            <person name="Villen J."/>
            <person name="Haas W."/>
            <person name="Sowa M.E."/>
            <person name="Gygi S.P."/>
        </authorList>
    </citation>
    <scope>IDENTIFICATION BY MASS SPECTROMETRY [LARGE SCALE ANALYSIS]</scope>
    <source>
        <tissue>Brain</tissue>
        <tissue>Heart</tissue>
        <tissue>Pancreas</tissue>
        <tissue>Spleen</tissue>
        <tissue>Testis</tissue>
    </source>
</reference>
<organism>
    <name type="scientific">Mus musculus</name>
    <name type="common">Mouse</name>
    <dbReference type="NCBI Taxonomy" id="10090"/>
    <lineage>
        <taxon>Eukaryota</taxon>
        <taxon>Metazoa</taxon>
        <taxon>Chordata</taxon>
        <taxon>Craniata</taxon>
        <taxon>Vertebrata</taxon>
        <taxon>Euteleostomi</taxon>
        <taxon>Mammalia</taxon>
        <taxon>Eutheria</taxon>
        <taxon>Euarchontoglires</taxon>
        <taxon>Glires</taxon>
        <taxon>Rodentia</taxon>
        <taxon>Myomorpha</taxon>
        <taxon>Muroidea</taxon>
        <taxon>Muridae</taxon>
        <taxon>Murinae</taxon>
        <taxon>Mus</taxon>
        <taxon>Mus</taxon>
    </lineage>
</organism>
<gene>
    <name type="primary">Lsm6</name>
</gene>
<sequence length="80" mass="9128">MSLRKQTPSDFLKQIIGRPVVVKLNSGVDYRGVLACLDGYMNIALEQTEEYVNGQLKNKYGDAFIRGNNVLYISTQKRRM</sequence>
<protein>
    <recommendedName>
        <fullName>U6 snRNA-associated Sm-like protein LSm6</fullName>
    </recommendedName>
</protein>
<comment type="function">
    <text evidence="1">Plays a role in pre-mRNA splicing as component of the U4/U6-U5 tri-snRNP complex that is involved in spliceosome assembly, and as component of the precatalytic spliceosome (spliceosome B complex). The heptameric LSM2-8 complex binds specifically to the 3'-terminal U-tract of U6 snRNA. Component of LSm protein complexes, which are involved in RNA processing and may function in a chaperone-like manner, facilitating the efficient association of RNA processing factors with their substrates. Component of the cytoplasmic LSM1-LSM7 complex, which is thought to be involved in mRNA degradation by activating the decapping step in the 5'-to-3' mRNA decay pathway.</text>
</comment>
<comment type="subunit">
    <text evidence="1">Component of the precatalytic spliceosome (spliceosome B complex). Component of the U4/U6-U5 tri-snRNP complex, a building block of the precatalytic spliceosome (spliceosome B complex). The U4/U6-U5 tri-snRNP complex is composed of the U4, U6 and U5 snRNAs and at least PRPF3, PRPF4, PRPF6, PRPF8, PRPF31, SNRNP200, TXNL4A, SNRNP40, SNRPB, SNRPD1, SNRPD2, SNRPD3, SNRPE, SNRPF, SNRPG, DDX23, CD2BP2, PPIH, SNU13, EFTUD2, SART1 and USP39, plus LSM2, LSM3, LSM4, LSM5, LSM6, LSM7 and LSM8. LSM2, LSM3, LSM4, LSM5, LSM6, LSM7 and LSM8 form a heptameric, ring-shaped subcomplex (the LSM2-8 complex) that is part of the U4/U6-U5 tri-snRNP complex and the precatalytic spliceosome. Component of the heptameric LSM1-LSM7 complex, which consists of LSM1, LSM2, LSM3, LSM4, LSM5, LSM6 and LSM7.</text>
</comment>
<comment type="subcellular location">
    <subcellularLocation>
        <location evidence="1">Cytoplasm</location>
    </subcellularLocation>
    <subcellularLocation>
        <location evidence="1">Nucleus</location>
    </subcellularLocation>
</comment>
<comment type="similarity">
    <text evidence="3">Belongs to the snRNP Sm proteins family. SmF/LSm6 subfamily.</text>
</comment>